<organism>
    <name type="scientific">Rotavirus A (strain RVA/Cow/United States/WC3/1981/G6P7[5])</name>
    <name type="common">RV-A</name>
    <name type="synonym">Rotavirus (strain Wistar calf 3)</name>
    <dbReference type="NCBI Taxonomy" id="578828"/>
    <lineage>
        <taxon>Viruses</taxon>
        <taxon>Riboviria</taxon>
        <taxon>Orthornavirae</taxon>
        <taxon>Duplornaviricota</taxon>
        <taxon>Resentoviricetes</taxon>
        <taxon>Reovirales</taxon>
        <taxon>Sedoreoviridae</taxon>
        <taxon>Rotavirus</taxon>
        <taxon>Rotavirus A</taxon>
    </lineage>
</organism>
<sequence length="880" mass="102511">MAYRKRGARREANINNNDRMQEKDDEKQDQNNRMQLSDKVLSKKEEVVTDNQEEIKIADEVKKSTKEESKQLLEVLKTKEEHQKEIQYEILQKTIPTFEPKESILKKLEDIKPEQAKKQTKLFRIFEPRQLPIYRANGEKELRNRWYWKLKKDTLPDGDYDVREYFLNLYDQVLTEMPDYLLLKDMAVENKNSRDAGKVVDSETASICDAIFQDEETEGAVRRFIAEMRQRVQADRNVVNYPSILHPIDYAFNEYFLQHQLVEPLNNDIIFNYIPERIRNDVNYILNMDRNLPSTARYIRPNLLQDRLNLHDNFESLWDTITTSNYILARSVVPDLKELVSTEAQIQKMSQDLQLEALTIQSETQFLTGINSQAANDCFKTLIAAMLSQRTMSLDFVTTNYMSLISGMWLLTVVPNDMFIRESLVACQLAIVNTIIYPAFGMQRMHYRNGDPQTPFQIAEQQIQNFQVANWLHFVNNNQFRQVVIDGVLNQVLNDNIRDGHVINQLMEALMQLSRQQFPTMPVDYKRSIQRGILLLSNRLGQLVDLTRLLAYNYETLMACVTMNMQHVQTLTTEKLQLTSVTSLCMLIGNATVIPSPQTLFHYYNVNVNFHSNYNERINDAVAIITAANRLNLYQKKMKAIVEDFLKRLHIFDVARVPDDQMYRLRDRLRLLPVEVRRLDIFNLILMNMDQIERASDKIAQGVIIAYRDMQLERDEMYGYVNIARNLDGFQQINLEELMRTGDYAQITNMLLNNQPVALVGALPFVTDSSVISLIAKLDATVFAQIVKLRKVDTLKPILYKINSDSNDFYLVANYDWVPTSTTKVYKQVPQQFDFRNSMHMLTSNLTFTVYSDLLAFVSADTVEPINAVAFDNMRIMNEL</sequence>
<proteinExistence type="inferred from homology"/>
<protein>
    <recommendedName>
        <fullName evidence="1">Inner capsid protein VP2</fullName>
    </recommendedName>
</protein>
<name>VP2_ROTW3</name>
<organismHost>
    <name type="scientific">Bos taurus</name>
    <name type="common">Bovine</name>
    <dbReference type="NCBI Taxonomy" id="9913"/>
</organismHost>
<feature type="chain" id="PRO_0000368054" description="Inner capsid protein VP2">
    <location>
        <begin position="1"/>
        <end position="880"/>
    </location>
</feature>
<feature type="region of interest" description="5-fold hub; involved in the encapsidation of VP1 and VP3" evidence="1">
    <location>
        <begin position="1"/>
        <end position="80"/>
    </location>
</feature>
<feature type="region of interest" description="Disordered" evidence="2">
    <location>
        <begin position="1"/>
        <end position="39"/>
    </location>
</feature>
<feature type="region of interest" description="Hydrophobic" evidence="1">
    <location>
        <begin position="394"/>
        <end position="414"/>
    </location>
</feature>
<feature type="region of interest" description="Hydrophobic" evidence="1">
    <location>
        <begin position="422"/>
        <end position="442"/>
    </location>
</feature>
<feature type="compositionally biased region" description="Basic and acidic residues" evidence="2">
    <location>
        <begin position="19"/>
        <end position="30"/>
    </location>
</feature>
<feature type="site" description="Interaction with the intermediate capsid protein VP6" evidence="1">
    <location>
        <position position="220"/>
    </location>
</feature>
<feature type="site" description="Interaction with the intermediate capsid protein VP6" evidence="1">
    <location>
        <position position="224"/>
    </location>
</feature>
<feature type="site" description="Interaction with the intermediate capsid protein VP6" evidence="1">
    <location>
        <position position="228"/>
    </location>
</feature>
<feature type="site" description="Interaction with the intermediate capsid protein VP6" evidence="1">
    <location>
        <position position="839"/>
    </location>
</feature>
<feature type="site" description="Interaction with the intermediate capsid protein VP6" evidence="1">
    <location>
        <position position="841"/>
    </location>
</feature>
<evidence type="ECO:0000255" key="1">
    <source>
        <dbReference type="HAMAP-Rule" id="MF_04127"/>
    </source>
</evidence>
<evidence type="ECO:0000256" key="2">
    <source>
        <dbReference type="SAM" id="MobiDB-lite"/>
    </source>
</evidence>
<dbReference type="EMBL" id="EF560616">
    <property type="protein sequence ID" value="ABU48677.1"/>
    <property type="molecule type" value="Genomic_RNA"/>
</dbReference>
<dbReference type="SMR" id="B2BMF8"/>
<dbReference type="Proteomes" id="UP000007181">
    <property type="component" value="Genome"/>
</dbReference>
<dbReference type="GO" id="GO:0039616">
    <property type="term" value="C:T=2 icosahedral viral capsid"/>
    <property type="evidence" value="ECO:0007669"/>
    <property type="project" value="UniProtKB-UniRule"/>
</dbReference>
<dbReference type="GO" id="GO:0039625">
    <property type="term" value="C:viral inner capsid"/>
    <property type="evidence" value="ECO:0007669"/>
    <property type="project" value="UniProtKB-UniRule"/>
</dbReference>
<dbReference type="GO" id="GO:0019013">
    <property type="term" value="C:viral nucleocapsid"/>
    <property type="evidence" value="ECO:0007669"/>
    <property type="project" value="UniProtKB-UniRule"/>
</dbReference>
<dbReference type="GO" id="GO:0003723">
    <property type="term" value="F:RNA binding"/>
    <property type="evidence" value="ECO:0007669"/>
    <property type="project" value="UniProtKB-UniRule"/>
</dbReference>
<dbReference type="HAMAP" id="MF_04123">
    <property type="entry name" value="Rota_VP2"/>
    <property type="match status" value="1"/>
</dbReference>
<dbReference type="HAMAP" id="MF_04127">
    <property type="entry name" value="Rota_VP2_A"/>
    <property type="match status" value="1"/>
</dbReference>
<dbReference type="InterPro" id="IPR007779">
    <property type="entry name" value="Rotavirus_VP2"/>
</dbReference>
<dbReference type="Pfam" id="PF05087">
    <property type="entry name" value="Rota_VP2"/>
    <property type="match status" value="1"/>
</dbReference>
<reference key="1">
    <citation type="journal article" date="2008" name="J. Virol.">
        <title>Full genome-based classification of rotaviruses reveals a common origin between human Wa-Like and porcine rotavirus strains and human DS-1-like and bovine rotavirus strains.</title>
        <authorList>
            <person name="Matthijnssens J."/>
            <person name="Ciarlet M."/>
            <person name="Heiman E.M."/>
            <person name="Arijs I."/>
            <person name="Delbeke T."/>
            <person name="McDonald S.M."/>
            <person name="Palombo E.A."/>
            <person name="Iturriza-Gomara M."/>
            <person name="Maes P."/>
            <person name="Patton J.T."/>
            <person name="Rahman M."/>
            <person name="Van Ranst M."/>
        </authorList>
    </citation>
    <scope>NUCLEOTIDE SEQUENCE [GENOMIC RNA]</scope>
</reference>
<keyword id="KW-0167">Capsid protein</keyword>
<keyword id="KW-1153">Inner capsid protein</keyword>
<keyword id="KW-0677">Repeat</keyword>
<keyword id="KW-0694">RNA-binding</keyword>
<keyword id="KW-1141">T=2 icosahedral capsid protein</keyword>
<keyword id="KW-0832">Ubl conjugation</keyword>
<keyword id="KW-0946">Virion</keyword>
<accession>B2BMF8</accession>
<comment type="function">
    <text evidence="1">Inner capsid protein that self-assembles to form an icosahedral capsid with a T=2 symmetry, which consists of 120 copies of VP2, with channels at each of its five-fold vertices. This capsid constitutes the innermost concentric layer of the viral mature particle. It encapsidates the polymerase VP1, the capping enzyme VP3 and the genomic dsRNA, thereby defining the core. The innermost VP2 capsid and the intermediate VP6 capsid remain intact following cell entry to protect the dsRNA from degradation and to prevent unfavorable antiviral responses in the host cell during all the replication cycle of the virus. Nascent transcripts are transcribed within the structural confines of this double-layered particle (DLP) and are extruded through the channels formed by VP2 N-termini. VP2 is required for the replicase activity of VP1 polymerase. Probably recruits a copy of a VP1-VP3 complex, potentially along with a segment of plus-strand RNA, as a decamer of VP2 assembles. May activate the autoinhibited VP1/RNA complex to coordinate packaging and genome replication.</text>
</comment>
<comment type="subunit">
    <text evidence="1">Homodecamer; each decamer is made up of two conformers of VP2, called VP2A and VP2B. Interacts with a VP1-VP3 complex. Interacts with the intermediate capsid protein VP6. Interacts with NSP5. Interacts (via N-terminus) with NSP2.</text>
</comment>
<comment type="subcellular location">
    <subcellularLocation>
        <location evidence="1">Virion</location>
    </subcellularLocation>
    <text evidence="1">Inner capsid protein. Also found in spherical cytoplasmic structures, called virus factories, that appear early after infection and are the site of viral replication and packaging.</text>
</comment>
<comment type="domain">
    <text evidence="1">The N-terminus binds RNA. It is necessary for encapsidation of VP1 and VP3. The N-termini of 10 VP2 molecules form a cylindrical hub underneath each 5-fold axis of the inner capsid.</text>
</comment>
<comment type="PTM">
    <text evidence="1">Sumoylated with SUMO1 and SUMO2. Sumoylation of viral proteins seems to have a positive role on viral replication.</text>
</comment>
<comment type="similarity">
    <text evidence="1">Belongs to the rotavirus VP2 family.</text>
</comment>